<name>DCD_NOVAD</name>
<sequence length="184" mass="20501">MAILSDKWIRDKALNEGMIEPFVENQRRDGCISYGLSSYGYDARVAPEFKIFTNVDSAVVDPKDFASNSFVDRETDVCVIPPNSFALARTVEYFRVPRDVLVICLGKSTYARCGIIVNVTPLEPGWEGHVTLEFSNTTPLPAKIYANEGACQFLFLQGNEPCEVSYADRAGKYMGQRGVTLPRL</sequence>
<gene>
    <name evidence="1" type="primary">dcd</name>
    <name type="ordered locus">Saro_0146</name>
</gene>
<evidence type="ECO:0000255" key="1">
    <source>
        <dbReference type="HAMAP-Rule" id="MF_00146"/>
    </source>
</evidence>
<feature type="chain" id="PRO_1000009776" description="dCTP deaminase">
    <location>
        <begin position="1"/>
        <end position="184"/>
    </location>
</feature>
<feature type="active site" description="Proton donor/acceptor" evidence="1">
    <location>
        <position position="133"/>
    </location>
</feature>
<feature type="binding site" evidence="1">
    <location>
        <begin position="107"/>
        <end position="112"/>
    </location>
    <ligand>
        <name>dCTP</name>
        <dbReference type="ChEBI" id="CHEBI:61481"/>
    </ligand>
</feature>
<feature type="binding site" evidence="1">
    <location>
        <begin position="131"/>
        <end position="133"/>
    </location>
    <ligand>
        <name>dCTP</name>
        <dbReference type="ChEBI" id="CHEBI:61481"/>
    </ligand>
</feature>
<feature type="binding site" evidence="1">
    <location>
        <position position="152"/>
    </location>
    <ligand>
        <name>dCTP</name>
        <dbReference type="ChEBI" id="CHEBI:61481"/>
    </ligand>
</feature>
<feature type="binding site" evidence="1">
    <location>
        <position position="166"/>
    </location>
    <ligand>
        <name>dCTP</name>
        <dbReference type="ChEBI" id="CHEBI:61481"/>
    </ligand>
</feature>
<feature type="binding site" evidence="1">
    <location>
        <position position="176"/>
    </location>
    <ligand>
        <name>dCTP</name>
        <dbReference type="ChEBI" id="CHEBI:61481"/>
    </ligand>
</feature>
<comment type="function">
    <text evidence="1">Catalyzes the deamination of dCTP to dUTP.</text>
</comment>
<comment type="catalytic activity">
    <reaction evidence="1">
        <text>dCTP + H2O + H(+) = dUTP + NH4(+)</text>
        <dbReference type="Rhea" id="RHEA:22680"/>
        <dbReference type="ChEBI" id="CHEBI:15377"/>
        <dbReference type="ChEBI" id="CHEBI:15378"/>
        <dbReference type="ChEBI" id="CHEBI:28938"/>
        <dbReference type="ChEBI" id="CHEBI:61481"/>
        <dbReference type="ChEBI" id="CHEBI:61555"/>
        <dbReference type="EC" id="3.5.4.13"/>
    </reaction>
</comment>
<comment type="pathway">
    <text evidence="1">Pyrimidine metabolism; dUMP biosynthesis; dUMP from dCTP (dUTP route): step 1/2.</text>
</comment>
<comment type="subunit">
    <text evidence="1">Homotrimer.</text>
</comment>
<comment type="similarity">
    <text evidence="1">Belongs to the dCTP deaminase family.</text>
</comment>
<accession>Q2GC28</accession>
<protein>
    <recommendedName>
        <fullName evidence="1">dCTP deaminase</fullName>
        <ecNumber evidence="1">3.5.4.13</ecNumber>
    </recommendedName>
    <alternativeName>
        <fullName evidence="1">Deoxycytidine triphosphate deaminase</fullName>
    </alternativeName>
</protein>
<dbReference type="EC" id="3.5.4.13" evidence="1"/>
<dbReference type="EMBL" id="CP000248">
    <property type="protein sequence ID" value="ABD24595.1"/>
    <property type="molecule type" value="Genomic_DNA"/>
</dbReference>
<dbReference type="RefSeq" id="WP_011443809.1">
    <property type="nucleotide sequence ID" value="NC_007794.1"/>
</dbReference>
<dbReference type="SMR" id="Q2GC28"/>
<dbReference type="STRING" id="279238.Saro_0146"/>
<dbReference type="KEGG" id="nar:Saro_0146"/>
<dbReference type="eggNOG" id="COG0717">
    <property type="taxonomic scope" value="Bacteria"/>
</dbReference>
<dbReference type="HOGENOM" id="CLU_087476_4_0_5"/>
<dbReference type="UniPathway" id="UPA00610">
    <property type="reaction ID" value="UER00665"/>
</dbReference>
<dbReference type="Proteomes" id="UP000009134">
    <property type="component" value="Chromosome"/>
</dbReference>
<dbReference type="GO" id="GO:0008829">
    <property type="term" value="F:dCTP deaminase activity"/>
    <property type="evidence" value="ECO:0007669"/>
    <property type="project" value="UniProtKB-UniRule"/>
</dbReference>
<dbReference type="GO" id="GO:0000166">
    <property type="term" value="F:nucleotide binding"/>
    <property type="evidence" value="ECO:0007669"/>
    <property type="project" value="UniProtKB-KW"/>
</dbReference>
<dbReference type="GO" id="GO:0006226">
    <property type="term" value="P:dUMP biosynthetic process"/>
    <property type="evidence" value="ECO:0007669"/>
    <property type="project" value="UniProtKB-UniPathway"/>
</dbReference>
<dbReference type="GO" id="GO:0006229">
    <property type="term" value="P:dUTP biosynthetic process"/>
    <property type="evidence" value="ECO:0007669"/>
    <property type="project" value="UniProtKB-UniRule"/>
</dbReference>
<dbReference type="CDD" id="cd07557">
    <property type="entry name" value="trimeric_dUTPase"/>
    <property type="match status" value="1"/>
</dbReference>
<dbReference type="FunFam" id="2.70.40.10:FF:000001">
    <property type="entry name" value="dCTP deaminase"/>
    <property type="match status" value="1"/>
</dbReference>
<dbReference type="Gene3D" id="2.70.40.10">
    <property type="match status" value="1"/>
</dbReference>
<dbReference type="HAMAP" id="MF_00146">
    <property type="entry name" value="dCTP_deaminase"/>
    <property type="match status" value="1"/>
</dbReference>
<dbReference type="InterPro" id="IPR011962">
    <property type="entry name" value="dCTP_deaminase"/>
</dbReference>
<dbReference type="InterPro" id="IPR036157">
    <property type="entry name" value="dUTPase-like_sf"/>
</dbReference>
<dbReference type="InterPro" id="IPR033704">
    <property type="entry name" value="dUTPase_trimeric"/>
</dbReference>
<dbReference type="NCBIfam" id="TIGR02274">
    <property type="entry name" value="dCTP_deam"/>
    <property type="match status" value="1"/>
</dbReference>
<dbReference type="PANTHER" id="PTHR42680">
    <property type="entry name" value="DCTP DEAMINASE"/>
    <property type="match status" value="1"/>
</dbReference>
<dbReference type="PANTHER" id="PTHR42680:SF3">
    <property type="entry name" value="DCTP DEAMINASE"/>
    <property type="match status" value="1"/>
</dbReference>
<dbReference type="Pfam" id="PF22769">
    <property type="entry name" value="DCD"/>
    <property type="match status" value="1"/>
</dbReference>
<dbReference type="SUPFAM" id="SSF51283">
    <property type="entry name" value="dUTPase-like"/>
    <property type="match status" value="1"/>
</dbReference>
<organism>
    <name type="scientific">Novosphingobium aromaticivorans (strain ATCC 700278 / DSM 12444 / CCUG 56034 / CIP 105152 / NBRC 16084 / F199)</name>
    <dbReference type="NCBI Taxonomy" id="279238"/>
    <lineage>
        <taxon>Bacteria</taxon>
        <taxon>Pseudomonadati</taxon>
        <taxon>Pseudomonadota</taxon>
        <taxon>Alphaproteobacteria</taxon>
        <taxon>Sphingomonadales</taxon>
        <taxon>Sphingomonadaceae</taxon>
        <taxon>Novosphingobium</taxon>
    </lineage>
</organism>
<proteinExistence type="inferred from homology"/>
<keyword id="KW-0378">Hydrolase</keyword>
<keyword id="KW-0546">Nucleotide metabolism</keyword>
<keyword id="KW-0547">Nucleotide-binding</keyword>
<keyword id="KW-1185">Reference proteome</keyword>
<reference key="1">
    <citation type="submission" date="2006-01" db="EMBL/GenBank/DDBJ databases">
        <title>Complete sequence of Novosphingobium aromaticivorans DSM 12444.</title>
        <authorList>
            <consortium name="US DOE Joint Genome Institute"/>
            <person name="Copeland A."/>
            <person name="Lucas S."/>
            <person name="Lapidus A."/>
            <person name="Barry K."/>
            <person name="Detter J.C."/>
            <person name="Glavina T."/>
            <person name="Hammon N."/>
            <person name="Israni S."/>
            <person name="Pitluck S."/>
            <person name="Chain P."/>
            <person name="Malfatti S."/>
            <person name="Shin M."/>
            <person name="Vergez L."/>
            <person name="Schmutz J."/>
            <person name="Larimer F."/>
            <person name="Land M."/>
            <person name="Kyrpides N."/>
            <person name="Ivanova N."/>
            <person name="Fredrickson J."/>
            <person name="Balkwill D."/>
            <person name="Romine M.F."/>
            <person name="Richardson P."/>
        </authorList>
    </citation>
    <scope>NUCLEOTIDE SEQUENCE [LARGE SCALE GENOMIC DNA]</scope>
    <source>
        <strain>ATCC 700278 / DSM 12444 / CCUG 56034 / CIP 105152 / NBRC 16084 / F199</strain>
    </source>
</reference>